<proteinExistence type="inferred from homology"/>
<reference key="1">
    <citation type="journal article" date="2009" name="PLoS ONE">
        <title>Salmonella paratyphi C: genetic divergence from Salmonella choleraesuis and pathogenic convergence with Salmonella typhi.</title>
        <authorList>
            <person name="Liu W.-Q."/>
            <person name="Feng Y."/>
            <person name="Wang Y."/>
            <person name="Zou Q.-H."/>
            <person name="Chen F."/>
            <person name="Guo J.-T."/>
            <person name="Peng Y.-H."/>
            <person name="Jin Y."/>
            <person name="Li Y.-G."/>
            <person name="Hu S.-N."/>
            <person name="Johnston R.N."/>
            <person name="Liu G.-R."/>
            <person name="Liu S.-L."/>
        </authorList>
    </citation>
    <scope>NUCLEOTIDE SEQUENCE [LARGE SCALE GENOMIC DNA]</scope>
    <source>
        <strain>RKS4594</strain>
    </source>
</reference>
<feature type="chain" id="PRO_1000184194" description="2-aminoethylphosphonate--pyruvate transaminase">
    <location>
        <begin position="1"/>
        <end position="367"/>
    </location>
</feature>
<feature type="modified residue" description="N6-(pyridoxal phosphate)lysine" evidence="1">
    <location>
        <position position="194"/>
    </location>
</feature>
<evidence type="ECO:0000255" key="1">
    <source>
        <dbReference type="HAMAP-Rule" id="MF_01376"/>
    </source>
</evidence>
<protein>
    <recommendedName>
        <fullName evidence="1">2-aminoethylphosphonate--pyruvate transaminase</fullName>
        <ecNumber evidence="1">2.6.1.37</ecNumber>
    </recommendedName>
    <alternativeName>
        <fullName evidence="1">2-aminoethylphosphonate aminotransferase</fullName>
    </alternativeName>
    <alternativeName>
        <fullName evidence="1">AEP transaminase</fullName>
        <shortName evidence="1">AEPT</shortName>
    </alternativeName>
</protein>
<comment type="function">
    <text evidence="1">Involved in phosphonate degradation.</text>
</comment>
<comment type="catalytic activity">
    <reaction evidence="1">
        <text>(2-aminoethyl)phosphonate + pyruvate = phosphonoacetaldehyde + L-alanine</text>
        <dbReference type="Rhea" id="RHEA:17021"/>
        <dbReference type="ChEBI" id="CHEBI:15361"/>
        <dbReference type="ChEBI" id="CHEBI:57418"/>
        <dbReference type="ChEBI" id="CHEBI:57972"/>
        <dbReference type="ChEBI" id="CHEBI:58383"/>
        <dbReference type="EC" id="2.6.1.37"/>
    </reaction>
</comment>
<comment type="cofactor">
    <cofactor evidence="1">
        <name>pyridoxal 5'-phosphate</name>
        <dbReference type="ChEBI" id="CHEBI:597326"/>
    </cofactor>
</comment>
<comment type="subunit">
    <text evidence="1">Homodimer.</text>
</comment>
<comment type="similarity">
    <text evidence="1">Belongs to the class-V pyridoxal-phosphate-dependent aminotransferase family. PhnW subfamily.</text>
</comment>
<accession>C0Q7V5</accession>
<organism>
    <name type="scientific">Salmonella paratyphi C (strain RKS4594)</name>
    <dbReference type="NCBI Taxonomy" id="476213"/>
    <lineage>
        <taxon>Bacteria</taxon>
        <taxon>Pseudomonadati</taxon>
        <taxon>Pseudomonadota</taxon>
        <taxon>Gammaproteobacteria</taxon>
        <taxon>Enterobacterales</taxon>
        <taxon>Enterobacteriaceae</taxon>
        <taxon>Salmonella</taxon>
    </lineage>
</organism>
<name>PHNW_SALPC</name>
<sequence>MTSRNYLLLTPGPLTTSRTVKEAMLFDSCTWDDDYNIGVVEQIRQQLTALATASEGYTSVLLQGSGSYAVEAVLGSALGPQDKVLIVSNGAYGARMVEMAGLMGIAHHAYDCGEVARPDVQAIDAILNADPTISHIAMVHSETTTGMLNPIDEVGALAQRYDKTYIVDAMSSFGGIPMDIAALHIDYLISSANKCIQGVPGFAFVIAREQKLAACKGHSRSLSLDLYAQWRCMEDNHGKWRFTSPTHTVLAFAQALKELAEEGGVAARHQRYQQNQRSLVAGMRALGFNTLLDDELHSPIITAFYSPEDPQYRFSEFYRRLKEQGFVIYPGKVSQSDCFRIGNIGEVYAADITALLTAIRTAMYWTK</sequence>
<gene>
    <name evidence="1" type="primary">phnW</name>
    <name type="ordered locus">SPC_0443</name>
</gene>
<keyword id="KW-0032">Aminotransferase</keyword>
<keyword id="KW-0663">Pyridoxal phosphate</keyword>
<keyword id="KW-0670">Pyruvate</keyword>
<keyword id="KW-0808">Transferase</keyword>
<dbReference type="EC" id="2.6.1.37" evidence="1"/>
<dbReference type="EMBL" id="CP000857">
    <property type="protein sequence ID" value="ACN44625.1"/>
    <property type="molecule type" value="Genomic_DNA"/>
</dbReference>
<dbReference type="RefSeq" id="WP_000203961.1">
    <property type="nucleotide sequence ID" value="NC_012125.1"/>
</dbReference>
<dbReference type="SMR" id="C0Q7V5"/>
<dbReference type="KEGG" id="sei:SPC_0443"/>
<dbReference type="HOGENOM" id="CLU_027686_3_1_6"/>
<dbReference type="Proteomes" id="UP000001599">
    <property type="component" value="Chromosome"/>
</dbReference>
<dbReference type="GO" id="GO:0047304">
    <property type="term" value="F:2-aminoethylphosphonate-pyruvate transaminase activity"/>
    <property type="evidence" value="ECO:0007669"/>
    <property type="project" value="UniProtKB-UniRule"/>
</dbReference>
<dbReference type="GO" id="GO:0019700">
    <property type="term" value="P:organic phosphonate catabolic process"/>
    <property type="evidence" value="ECO:0007669"/>
    <property type="project" value="InterPro"/>
</dbReference>
<dbReference type="Gene3D" id="3.90.1150.10">
    <property type="entry name" value="Aspartate Aminotransferase, domain 1"/>
    <property type="match status" value="1"/>
</dbReference>
<dbReference type="Gene3D" id="3.40.640.10">
    <property type="entry name" value="Type I PLP-dependent aspartate aminotransferase-like (Major domain)"/>
    <property type="match status" value="1"/>
</dbReference>
<dbReference type="HAMAP" id="MF_01376">
    <property type="entry name" value="PhnW_aminotrans_5"/>
    <property type="match status" value="1"/>
</dbReference>
<dbReference type="InterPro" id="IPR000192">
    <property type="entry name" value="Aminotrans_V_dom"/>
</dbReference>
<dbReference type="InterPro" id="IPR012703">
    <property type="entry name" value="NH2EtPonate_pyrv_transaminase"/>
</dbReference>
<dbReference type="InterPro" id="IPR015424">
    <property type="entry name" value="PyrdxlP-dep_Trfase"/>
</dbReference>
<dbReference type="InterPro" id="IPR015421">
    <property type="entry name" value="PyrdxlP-dep_Trfase_major"/>
</dbReference>
<dbReference type="InterPro" id="IPR015422">
    <property type="entry name" value="PyrdxlP-dep_Trfase_small"/>
</dbReference>
<dbReference type="InterPro" id="IPR024169">
    <property type="entry name" value="SP_NH2Trfase/AEP_transaminase"/>
</dbReference>
<dbReference type="NCBIfam" id="TIGR03301">
    <property type="entry name" value="PhnW-AepZ"/>
    <property type="match status" value="1"/>
</dbReference>
<dbReference type="NCBIfam" id="NF010006">
    <property type="entry name" value="PRK13479.1"/>
    <property type="match status" value="1"/>
</dbReference>
<dbReference type="NCBIfam" id="TIGR02326">
    <property type="entry name" value="transamin_PhnW"/>
    <property type="match status" value="1"/>
</dbReference>
<dbReference type="PANTHER" id="PTHR42778">
    <property type="entry name" value="2-AMINOETHYLPHOSPHONATE--PYRUVATE TRANSAMINASE"/>
    <property type="match status" value="1"/>
</dbReference>
<dbReference type="PANTHER" id="PTHR42778:SF1">
    <property type="entry name" value="2-AMINOETHYLPHOSPHONATE--PYRUVATE TRANSAMINASE"/>
    <property type="match status" value="1"/>
</dbReference>
<dbReference type="Pfam" id="PF00266">
    <property type="entry name" value="Aminotran_5"/>
    <property type="match status" value="1"/>
</dbReference>
<dbReference type="PIRSF" id="PIRSF000524">
    <property type="entry name" value="SPT"/>
    <property type="match status" value="1"/>
</dbReference>
<dbReference type="SUPFAM" id="SSF53383">
    <property type="entry name" value="PLP-dependent transferases"/>
    <property type="match status" value="1"/>
</dbReference>